<name>PSAJ_HETA4</name>
<gene>
    <name evidence="1" type="primary">psaJ</name>
    <name type="ordered locus">Heak452_Cp155</name>
</gene>
<keyword id="KW-0150">Chloroplast</keyword>
<keyword id="KW-0472">Membrane</keyword>
<keyword id="KW-0602">Photosynthesis</keyword>
<keyword id="KW-0603">Photosystem I</keyword>
<keyword id="KW-0934">Plastid</keyword>
<keyword id="KW-0793">Thylakoid</keyword>
<keyword id="KW-0812">Transmembrane</keyword>
<keyword id="KW-1133">Transmembrane helix</keyword>
<protein>
    <recommendedName>
        <fullName evidence="1">Photosystem I reaction center subunit IX</fullName>
    </recommendedName>
    <alternativeName>
        <fullName evidence="1">PSI-J</fullName>
    </alternativeName>
</protein>
<organism>
    <name type="scientific">Heterosigma akashiwo (strain CCMP452 / OLISTH)</name>
    <dbReference type="NCBI Taxonomy" id="536046"/>
    <lineage>
        <taxon>Eukaryota</taxon>
        <taxon>Sar</taxon>
        <taxon>Stramenopiles</taxon>
        <taxon>Ochrophyta</taxon>
        <taxon>Raphidophyceae</taxon>
        <taxon>Chattonellales</taxon>
        <taxon>Chattonellaceae</taxon>
        <taxon>Heterosigma</taxon>
    </lineage>
</organism>
<comment type="function">
    <text evidence="1">May help in the organization of the PsaE and PsaF subunits.</text>
</comment>
<comment type="subcellular location">
    <subcellularLocation>
        <location evidence="1">Plastid</location>
        <location evidence="1">Chloroplast thylakoid membrane</location>
        <topology evidence="1">Single-pass membrane protein</topology>
    </subcellularLocation>
</comment>
<comment type="similarity">
    <text evidence="1">Belongs to the PsaJ family.</text>
</comment>
<sequence length="41" mass="4667">MDNFKKYLSTAPVLLTVWLSITASGIMIINRLYPDPLIFPI</sequence>
<dbReference type="EMBL" id="EU168191">
    <property type="protein sequence ID" value="ABV70203.1"/>
    <property type="molecule type" value="Genomic_DNA"/>
</dbReference>
<dbReference type="RefSeq" id="YP_001936456.1">
    <property type="nucleotide sequence ID" value="NC_010772.1"/>
</dbReference>
<dbReference type="SMR" id="B2XTX0"/>
<dbReference type="GeneID" id="6335738"/>
<dbReference type="GO" id="GO:0009535">
    <property type="term" value="C:chloroplast thylakoid membrane"/>
    <property type="evidence" value="ECO:0007669"/>
    <property type="project" value="UniProtKB-SubCell"/>
</dbReference>
<dbReference type="GO" id="GO:0009522">
    <property type="term" value="C:photosystem I"/>
    <property type="evidence" value="ECO:0007669"/>
    <property type="project" value="UniProtKB-KW"/>
</dbReference>
<dbReference type="GO" id="GO:0015979">
    <property type="term" value="P:photosynthesis"/>
    <property type="evidence" value="ECO:0007669"/>
    <property type="project" value="UniProtKB-UniRule"/>
</dbReference>
<dbReference type="Gene3D" id="1.20.5.510">
    <property type="entry name" value="Single helix bin"/>
    <property type="match status" value="1"/>
</dbReference>
<dbReference type="HAMAP" id="MF_00522">
    <property type="entry name" value="PSI_PsaJ"/>
    <property type="match status" value="1"/>
</dbReference>
<dbReference type="InterPro" id="IPR002615">
    <property type="entry name" value="PSI_PsaJ"/>
</dbReference>
<dbReference type="InterPro" id="IPR036062">
    <property type="entry name" value="PSI_PsaJ_sf"/>
</dbReference>
<dbReference type="PANTHER" id="PTHR36082">
    <property type="match status" value="1"/>
</dbReference>
<dbReference type="PANTHER" id="PTHR36082:SF2">
    <property type="entry name" value="PHOTOSYSTEM I REACTION CENTER SUBUNIT IX"/>
    <property type="match status" value="1"/>
</dbReference>
<dbReference type="Pfam" id="PF01701">
    <property type="entry name" value="PSI_PsaJ"/>
    <property type="match status" value="1"/>
</dbReference>
<dbReference type="SUPFAM" id="SSF81544">
    <property type="entry name" value="Subunit IX of photosystem I reaction centre, PsaJ"/>
    <property type="match status" value="1"/>
</dbReference>
<reference key="1">
    <citation type="journal article" date="2008" name="BMC Genomics">
        <title>Chloroplast genome sequencing analysis of Heterosigma akashiwo CCMP452 (West Atlantic) and NIES293 (West Pacific) strains.</title>
        <authorList>
            <person name="Cattolico R.A."/>
            <person name="Jacobs M.A."/>
            <person name="Zhou Y."/>
            <person name="Chang J."/>
            <person name="Duplessis M."/>
            <person name="Lybrand T."/>
            <person name="McKay J."/>
            <person name="Ong H.C."/>
            <person name="Sims E."/>
            <person name="Rocap G."/>
        </authorList>
    </citation>
    <scope>NUCLEOTIDE SEQUENCE [LARGE SCALE GENOMIC DNA]</scope>
</reference>
<proteinExistence type="inferred from homology"/>
<feature type="chain" id="PRO_0000354175" description="Photosystem I reaction center subunit IX">
    <location>
        <begin position="1"/>
        <end position="41"/>
    </location>
</feature>
<feature type="transmembrane region" description="Helical" evidence="1">
    <location>
        <begin position="7"/>
        <end position="29"/>
    </location>
</feature>
<geneLocation type="chloroplast"/>
<accession>B2XTX0</accession>
<evidence type="ECO:0000255" key="1">
    <source>
        <dbReference type="HAMAP-Rule" id="MF_00522"/>
    </source>
</evidence>